<protein>
    <recommendedName>
        <fullName evidence="1">Large ribosomal subunit protein bL36c</fullName>
    </recommendedName>
    <alternativeName>
        <fullName evidence="2">50S ribosomal protein L36, chloroplastic</fullName>
    </alternativeName>
</protein>
<proteinExistence type="inferred from homology"/>
<name>RK36_OENBI</name>
<geneLocation type="chloroplast"/>
<reference key="1">
    <citation type="journal article" date="2008" name="Nucleic Acids Res.">
        <title>The complete nucleotide sequences of the five genetically distinct plastid genomes of Oenothera, subsection Oenothera: I. Sequence evaluation and plastome evolution.</title>
        <authorList>
            <person name="Greiner S."/>
            <person name="Wang X."/>
            <person name="Rauwolf U."/>
            <person name="Silber M.V."/>
            <person name="Mayer K."/>
            <person name="Meurer J."/>
            <person name="Haberer G."/>
            <person name="Herrmann R.G."/>
        </authorList>
    </citation>
    <scope>NUCLEOTIDE SEQUENCE [LARGE SCALE GENOMIC DNA]</scope>
    <source>
        <strain>cv. Suaveolens Grado</strain>
    </source>
</reference>
<dbReference type="EMBL" id="EU262889">
    <property type="protein sequence ID" value="ABW98906.1"/>
    <property type="molecule type" value="Genomic_DNA"/>
</dbReference>
<dbReference type="RefSeq" id="YP_001687401.1">
    <property type="nucleotide sequence ID" value="NC_010361.1"/>
</dbReference>
<dbReference type="SMR" id="B0Z4Z4"/>
<dbReference type="GeneID" id="5952028"/>
<dbReference type="GO" id="GO:0009507">
    <property type="term" value="C:chloroplast"/>
    <property type="evidence" value="ECO:0007669"/>
    <property type="project" value="UniProtKB-SubCell"/>
</dbReference>
<dbReference type="GO" id="GO:1990904">
    <property type="term" value="C:ribonucleoprotein complex"/>
    <property type="evidence" value="ECO:0007669"/>
    <property type="project" value="UniProtKB-KW"/>
</dbReference>
<dbReference type="GO" id="GO:0005840">
    <property type="term" value="C:ribosome"/>
    <property type="evidence" value="ECO:0007669"/>
    <property type="project" value="UniProtKB-KW"/>
</dbReference>
<dbReference type="GO" id="GO:0003735">
    <property type="term" value="F:structural constituent of ribosome"/>
    <property type="evidence" value="ECO:0007669"/>
    <property type="project" value="InterPro"/>
</dbReference>
<dbReference type="GO" id="GO:0006412">
    <property type="term" value="P:translation"/>
    <property type="evidence" value="ECO:0007669"/>
    <property type="project" value="UniProtKB-UniRule"/>
</dbReference>
<dbReference type="HAMAP" id="MF_00251">
    <property type="entry name" value="Ribosomal_bL36"/>
    <property type="match status" value="1"/>
</dbReference>
<dbReference type="InterPro" id="IPR000473">
    <property type="entry name" value="Ribosomal_bL36"/>
</dbReference>
<dbReference type="InterPro" id="IPR035977">
    <property type="entry name" value="Ribosomal_bL36_sp"/>
</dbReference>
<dbReference type="NCBIfam" id="TIGR01022">
    <property type="entry name" value="rpmJ_bact"/>
    <property type="match status" value="1"/>
</dbReference>
<dbReference type="PANTHER" id="PTHR42888">
    <property type="entry name" value="50S RIBOSOMAL PROTEIN L36, CHLOROPLASTIC"/>
    <property type="match status" value="1"/>
</dbReference>
<dbReference type="PANTHER" id="PTHR42888:SF1">
    <property type="entry name" value="LARGE RIBOSOMAL SUBUNIT PROTEIN BL36C"/>
    <property type="match status" value="1"/>
</dbReference>
<dbReference type="Pfam" id="PF00444">
    <property type="entry name" value="Ribosomal_L36"/>
    <property type="match status" value="1"/>
</dbReference>
<dbReference type="SUPFAM" id="SSF57840">
    <property type="entry name" value="Ribosomal protein L36"/>
    <property type="match status" value="1"/>
</dbReference>
<dbReference type="PROSITE" id="PS00828">
    <property type="entry name" value="RIBOSOMAL_L36"/>
    <property type="match status" value="1"/>
</dbReference>
<feature type="chain" id="PRO_0000344774" description="Large ribosomal subunit protein bL36c">
    <location>
        <begin position="1"/>
        <end position="37"/>
    </location>
</feature>
<sequence length="37" mass="4432">MKIRASVRKICTKCRLIRRRGRIIVICSNPRHKQRQG</sequence>
<organism>
    <name type="scientific">Oenothera biennis</name>
    <name type="common">German evening primrose</name>
    <name type="synonym">Onagra biennis</name>
    <dbReference type="NCBI Taxonomy" id="3942"/>
    <lineage>
        <taxon>Eukaryota</taxon>
        <taxon>Viridiplantae</taxon>
        <taxon>Streptophyta</taxon>
        <taxon>Embryophyta</taxon>
        <taxon>Tracheophyta</taxon>
        <taxon>Spermatophyta</taxon>
        <taxon>Magnoliopsida</taxon>
        <taxon>eudicotyledons</taxon>
        <taxon>Gunneridae</taxon>
        <taxon>Pentapetalae</taxon>
        <taxon>rosids</taxon>
        <taxon>malvids</taxon>
        <taxon>Myrtales</taxon>
        <taxon>Onagraceae</taxon>
        <taxon>Onagroideae</taxon>
        <taxon>Onagreae</taxon>
        <taxon>Oenothera</taxon>
    </lineage>
</organism>
<evidence type="ECO:0000255" key="1">
    <source>
        <dbReference type="HAMAP-Rule" id="MF_00251"/>
    </source>
</evidence>
<evidence type="ECO:0000305" key="2"/>
<gene>
    <name evidence="1" type="primary">rpl36</name>
</gene>
<keyword id="KW-0150">Chloroplast</keyword>
<keyword id="KW-0934">Plastid</keyword>
<keyword id="KW-0687">Ribonucleoprotein</keyword>
<keyword id="KW-0689">Ribosomal protein</keyword>
<accession>B0Z4Z4</accession>
<comment type="subcellular location">
    <subcellularLocation>
        <location>Plastid</location>
        <location>Chloroplast</location>
    </subcellularLocation>
</comment>
<comment type="similarity">
    <text evidence="1">Belongs to the bacterial ribosomal protein bL36 family.</text>
</comment>